<evidence type="ECO:0000255" key="1">
    <source>
        <dbReference type="HAMAP-Rule" id="MF_01622"/>
    </source>
</evidence>
<organism>
    <name type="scientific">Pseudomonas putida (strain GB-1)</name>
    <dbReference type="NCBI Taxonomy" id="76869"/>
    <lineage>
        <taxon>Bacteria</taxon>
        <taxon>Pseudomonadati</taxon>
        <taxon>Pseudomonadota</taxon>
        <taxon>Gammaproteobacteria</taxon>
        <taxon>Pseudomonadales</taxon>
        <taxon>Pseudomonadaceae</taxon>
        <taxon>Pseudomonas</taxon>
    </lineage>
</organism>
<comment type="function">
    <text evidence="1">Involved in the post-transcriptional modification of the uridine at the wobble position (U34) of tRNA(Lys), tRNA(Glu) and tRNA(Gln). Catalyzes the conversion of 2-thiouridine (S2U-RNA) to 2-selenouridine (Se2U-RNA). Acts in a two-step process involving geranylation of 2-thiouridine (S2U) to S-geranyl-2-thiouridine (geS2U) and subsequent selenation of the latter derivative to 2-selenouridine (Se2U) in the tRNA chain.</text>
</comment>
<comment type="catalytic activity">
    <reaction evidence="1">
        <text>5-methylaminomethyl-2-thiouridine(34) in tRNA + selenophosphate + (2E)-geranyl diphosphate + H2O + H(+) = 5-methylaminomethyl-2-selenouridine(34) in tRNA + (2E)-thiogeraniol + phosphate + diphosphate</text>
        <dbReference type="Rhea" id="RHEA:42716"/>
        <dbReference type="Rhea" id="RHEA-COMP:10195"/>
        <dbReference type="Rhea" id="RHEA-COMP:10196"/>
        <dbReference type="ChEBI" id="CHEBI:15377"/>
        <dbReference type="ChEBI" id="CHEBI:15378"/>
        <dbReference type="ChEBI" id="CHEBI:16144"/>
        <dbReference type="ChEBI" id="CHEBI:33019"/>
        <dbReference type="ChEBI" id="CHEBI:43474"/>
        <dbReference type="ChEBI" id="CHEBI:58057"/>
        <dbReference type="ChEBI" id="CHEBI:74455"/>
        <dbReference type="ChEBI" id="CHEBI:82743"/>
        <dbReference type="ChEBI" id="CHEBI:143703"/>
        <dbReference type="EC" id="2.9.1.3"/>
    </reaction>
    <physiologicalReaction direction="left-to-right" evidence="1">
        <dbReference type="Rhea" id="RHEA:42717"/>
    </physiologicalReaction>
</comment>
<comment type="catalytic activity">
    <reaction evidence="1">
        <text>5-methylaminomethyl-2-thiouridine(34) in tRNA + (2E)-geranyl diphosphate = 5-methylaminomethyl-S-(2E)-geranyl-thiouridine(34) in tRNA + diphosphate</text>
        <dbReference type="Rhea" id="RHEA:14085"/>
        <dbReference type="Rhea" id="RHEA-COMP:10195"/>
        <dbReference type="Rhea" id="RHEA-COMP:14654"/>
        <dbReference type="ChEBI" id="CHEBI:33019"/>
        <dbReference type="ChEBI" id="CHEBI:58057"/>
        <dbReference type="ChEBI" id="CHEBI:74455"/>
        <dbReference type="ChEBI" id="CHEBI:140632"/>
    </reaction>
    <physiologicalReaction direction="left-to-right" evidence="1">
        <dbReference type="Rhea" id="RHEA:14086"/>
    </physiologicalReaction>
</comment>
<comment type="catalytic activity">
    <reaction evidence="1">
        <text>5-methylaminomethyl-S-(2E)-geranyl-thiouridine(34) in tRNA + selenophosphate + H(+) = 5-methylaminomethyl-2-(Se-phospho)selenouridine(34) in tRNA + (2E)-thiogeraniol</text>
        <dbReference type="Rhea" id="RHEA:60172"/>
        <dbReference type="Rhea" id="RHEA-COMP:14654"/>
        <dbReference type="Rhea" id="RHEA-COMP:15523"/>
        <dbReference type="ChEBI" id="CHEBI:15378"/>
        <dbReference type="ChEBI" id="CHEBI:16144"/>
        <dbReference type="ChEBI" id="CHEBI:140632"/>
        <dbReference type="ChEBI" id="CHEBI:143702"/>
        <dbReference type="ChEBI" id="CHEBI:143703"/>
    </reaction>
    <physiologicalReaction direction="left-to-right" evidence="1">
        <dbReference type="Rhea" id="RHEA:60173"/>
    </physiologicalReaction>
</comment>
<comment type="catalytic activity">
    <reaction evidence="1">
        <text>5-methylaminomethyl-2-(Se-phospho)selenouridine(34) in tRNA + H2O = 5-methylaminomethyl-2-selenouridine(34) in tRNA + phosphate</text>
        <dbReference type="Rhea" id="RHEA:60176"/>
        <dbReference type="Rhea" id="RHEA-COMP:10196"/>
        <dbReference type="Rhea" id="RHEA-COMP:15523"/>
        <dbReference type="ChEBI" id="CHEBI:15377"/>
        <dbReference type="ChEBI" id="CHEBI:43474"/>
        <dbReference type="ChEBI" id="CHEBI:82743"/>
        <dbReference type="ChEBI" id="CHEBI:143702"/>
    </reaction>
    <physiologicalReaction direction="left-to-right" evidence="1">
        <dbReference type="Rhea" id="RHEA:60177"/>
    </physiologicalReaction>
</comment>
<comment type="subunit">
    <text evidence="1">Monomer.</text>
</comment>
<comment type="similarity">
    <text evidence="1">Belongs to the SelU family.</text>
</comment>
<name>SELU_PSEPG</name>
<gene>
    <name evidence="1" type="primary">selU</name>
    <name type="ordered locus">PputGB1_0863</name>
</gene>
<proteinExistence type="inferred from homology"/>
<dbReference type="EC" id="2.9.1.3" evidence="1"/>
<dbReference type="EMBL" id="CP000926">
    <property type="protein sequence ID" value="ABY96773.1"/>
    <property type="molecule type" value="Genomic_DNA"/>
</dbReference>
<dbReference type="SMR" id="B0KPF4"/>
<dbReference type="KEGG" id="ppg:PputGB1_0863"/>
<dbReference type="eggNOG" id="COG2603">
    <property type="taxonomic scope" value="Bacteria"/>
</dbReference>
<dbReference type="HOGENOM" id="CLU_043456_1_0_6"/>
<dbReference type="Proteomes" id="UP000002157">
    <property type="component" value="Chromosome"/>
</dbReference>
<dbReference type="GO" id="GO:0016765">
    <property type="term" value="F:transferase activity, transferring alkyl or aryl (other than methyl) groups"/>
    <property type="evidence" value="ECO:0007669"/>
    <property type="project" value="UniProtKB-UniRule"/>
</dbReference>
<dbReference type="GO" id="GO:0043828">
    <property type="term" value="F:tRNA 2-selenouridine synthase activity"/>
    <property type="evidence" value="ECO:0007669"/>
    <property type="project" value="UniProtKB-EC"/>
</dbReference>
<dbReference type="GO" id="GO:0002098">
    <property type="term" value="P:tRNA wobble uridine modification"/>
    <property type="evidence" value="ECO:0007669"/>
    <property type="project" value="UniProtKB-UniRule"/>
</dbReference>
<dbReference type="CDD" id="cd01520">
    <property type="entry name" value="RHOD_YbbB"/>
    <property type="match status" value="1"/>
</dbReference>
<dbReference type="Gene3D" id="3.40.250.10">
    <property type="entry name" value="Rhodanese-like domain"/>
    <property type="match status" value="1"/>
</dbReference>
<dbReference type="HAMAP" id="MF_01622">
    <property type="entry name" value="tRNA_sel_U_synth"/>
    <property type="match status" value="1"/>
</dbReference>
<dbReference type="InterPro" id="IPR001763">
    <property type="entry name" value="Rhodanese-like_dom"/>
</dbReference>
<dbReference type="InterPro" id="IPR036873">
    <property type="entry name" value="Rhodanese-like_dom_sf"/>
</dbReference>
<dbReference type="InterPro" id="IPR017582">
    <property type="entry name" value="SelU"/>
</dbReference>
<dbReference type="NCBIfam" id="NF008750">
    <property type="entry name" value="PRK11784.1-2"/>
    <property type="match status" value="1"/>
</dbReference>
<dbReference type="NCBIfam" id="NF008751">
    <property type="entry name" value="PRK11784.1-3"/>
    <property type="match status" value="1"/>
</dbReference>
<dbReference type="NCBIfam" id="TIGR03167">
    <property type="entry name" value="tRNA_sel_U_synt"/>
    <property type="match status" value="1"/>
</dbReference>
<dbReference type="PANTHER" id="PTHR30401">
    <property type="entry name" value="TRNA 2-SELENOURIDINE SYNTHASE"/>
    <property type="match status" value="1"/>
</dbReference>
<dbReference type="PANTHER" id="PTHR30401:SF0">
    <property type="entry name" value="TRNA 2-SELENOURIDINE SYNTHASE"/>
    <property type="match status" value="1"/>
</dbReference>
<dbReference type="SMART" id="SM00450">
    <property type="entry name" value="RHOD"/>
    <property type="match status" value="1"/>
</dbReference>
<dbReference type="SUPFAM" id="SSF52821">
    <property type="entry name" value="Rhodanese/Cell cycle control phosphatase"/>
    <property type="match status" value="1"/>
</dbReference>
<dbReference type="PROSITE" id="PS50206">
    <property type="entry name" value="RHODANESE_3"/>
    <property type="match status" value="1"/>
</dbReference>
<reference key="1">
    <citation type="submission" date="2008-01" db="EMBL/GenBank/DDBJ databases">
        <title>Complete sequence of Pseudomonas putida GB-1.</title>
        <authorList>
            <consortium name="US DOE Joint Genome Institute"/>
            <person name="Copeland A."/>
            <person name="Lucas S."/>
            <person name="Lapidus A."/>
            <person name="Barry K."/>
            <person name="Glavina del Rio T."/>
            <person name="Dalin E."/>
            <person name="Tice H."/>
            <person name="Pitluck S."/>
            <person name="Bruce D."/>
            <person name="Goodwin L."/>
            <person name="Chertkov O."/>
            <person name="Brettin T."/>
            <person name="Detter J.C."/>
            <person name="Han C."/>
            <person name="Kuske C.R."/>
            <person name="Schmutz J."/>
            <person name="Larimer F."/>
            <person name="Land M."/>
            <person name="Hauser L."/>
            <person name="Kyrpides N."/>
            <person name="Kim E."/>
            <person name="McCarthy J.K."/>
            <person name="Richardson P."/>
        </authorList>
    </citation>
    <scope>NUCLEOTIDE SEQUENCE [LARGE SCALE GENOMIC DNA]</scope>
    <source>
        <strain>GB-1</strain>
    </source>
</reference>
<protein>
    <recommendedName>
        <fullName evidence="1">tRNA 2-selenouridine synthase</fullName>
        <ecNumber evidence="1">2.9.1.3</ecNumber>
    </recommendedName>
</protein>
<feature type="chain" id="PRO_1000088087" description="tRNA 2-selenouridine synthase">
    <location>
        <begin position="1"/>
        <end position="370"/>
    </location>
</feature>
<feature type="domain" description="Rhodanese" evidence="1">
    <location>
        <begin position="12"/>
        <end position="136"/>
    </location>
</feature>
<feature type="active site" description="S-selanylcysteine intermediate" evidence="1">
    <location>
        <position position="95"/>
    </location>
</feature>
<keyword id="KW-0711">Selenium</keyword>
<keyword id="KW-0808">Transferase</keyword>
<accession>B0KPF4</accession>
<sequence length="370" mass="42028">MRPDCTDFRQLFLDDVPMMDMRAPVEFAKGAFPGVVNLPLMNDQERQKVGTCYKQQGQAAAIALGHQLVSGTTKQARMDAWVAFTQANPQGYLYCFRGGLRSQIVQGWLRDEAGIQYPRVKGGYKAMRTFLLETTQQAVAQCDFVLLGGLTGTGKTDVLHQLDNVLDLEGHANHRGSSFGKRATAQPAQIDFENQLAIDVLKKRARGCEQFVLEDEGRIVGSCTVPLELYQGMQQYPLVWLEDSFANRVERILRDYVVNLSAEFIAVHGEEDGRRLFAERMLQSMANIYKRLGGERYQRLSEILRLALEEQQRSGAVDLHRGWIEGLLNEYYDPMYAYQRAAKAERIEFAGDAVEVREYLKARARRQPHH</sequence>